<dbReference type="EMBL" id="AJ002557">
    <property type="protein sequence ID" value="CAA05556.1"/>
    <property type="molecule type" value="Genomic_DNA"/>
</dbReference>
<dbReference type="EMBL" id="Z36042">
    <property type="protein sequence ID" value="CAA85134.1"/>
    <property type="molecule type" value="Genomic_DNA"/>
</dbReference>
<dbReference type="EMBL" id="AY558126">
    <property type="protein sequence ID" value="AAS56452.1"/>
    <property type="molecule type" value="Genomic_DNA"/>
</dbReference>
<dbReference type="EMBL" id="BK006936">
    <property type="protein sequence ID" value="DAA07289.1"/>
    <property type="molecule type" value="Genomic_DNA"/>
</dbReference>
<dbReference type="PIR" id="S46044">
    <property type="entry name" value="S46044"/>
</dbReference>
<dbReference type="RefSeq" id="NP_009732.1">
    <property type="nucleotide sequence ID" value="NM_001178521.1"/>
</dbReference>
<dbReference type="PDB" id="7LS6">
    <property type="method" value="EM"/>
    <property type="resolution" value="3.17 A"/>
    <property type="chains" value="H=1-148"/>
</dbReference>
<dbReference type="PDB" id="7LSX">
    <property type="method" value="EM"/>
    <property type="resolution" value="3.61 A"/>
    <property type="chains" value="H=1-148"/>
</dbReference>
<dbReference type="PDB" id="8RVL">
    <property type="method" value="EM"/>
    <property type="resolution" value="2.14 A"/>
    <property type="chains" value="3/6=1-148"/>
</dbReference>
<dbReference type="PDB" id="8RVO">
    <property type="method" value="EM"/>
    <property type="resolution" value="2.69 A"/>
    <property type="chains" value="3/6=1-148"/>
</dbReference>
<dbReference type="PDB" id="8RVP">
    <property type="method" value="EM"/>
    <property type="resolution" value="2.28 A"/>
    <property type="chains" value="3/6=1-148"/>
</dbReference>
<dbReference type="PDB" id="8T08">
    <property type="method" value="EM"/>
    <property type="resolution" value="3.00 A"/>
    <property type="chains" value="H/Y=1-148"/>
</dbReference>
<dbReference type="PDB" id="8U6Y">
    <property type="method" value="EM"/>
    <property type="resolution" value="2.80 A"/>
    <property type="chains" value="H/Y=1-148"/>
</dbReference>
<dbReference type="PDB" id="9D0T">
    <property type="method" value="EM"/>
    <property type="resolution" value="2.84 A"/>
    <property type="chains" value="P=1-148"/>
</dbReference>
<dbReference type="PDBsum" id="7LS6"/>
<dbReference type="PDBsum" id="7LSX"/>
<dbReference type="PDBsum" id="8RVL"/>
<dbReference type="PDBsum" id="8RVO"/>
<dbReference type="PDBsum" id="8RVP"/>
<dbReference type="PDBsum" id="8T08"/>
<dbReference type="PDBsum" id="8U6Y"/>
<dbReference type="PDBsum" id="9D0T"/>
<dbReference type="BMRB" id="P38293"/>
<dbReference type="EMDB" id="EMD-19523"/>
<dbReference type="EMDB" id="EMD-19527"/>
<dbReference type="EMDB" id="EMD-19528"/>
<dbReference type="EMDB" id="EMD-23503"/>
<dbReference type="EMDB" id="EMD-23508"/>
<dbReference type="EMDB" id="EMD-40938"/>
<dbReference type="EMDB" id="EMD-41963"/>
<dbReference type="SMR" id="P38293"/>
<dbReference type="BioGRID" id="32873">
    <property type="interactions" value="318"/>
</dbReference>
<dbReference type="DIP" id="DIP-2815N"/>
<dbReference type="FunCoup" id="P38293">
    <property type="interactions" value="465"/>
</dbReference>
<dbReference type="IntAct" id="P38293">
    <property type="interactions" value="29"/>
</dbReference>
<dbReference type="MINT" id="P38293"/>
<dbReference type="STRING" id="4932.YBR173C"/>
<dbReference type="iPTMnet" id="P38293"/>
<dbReference type="PaxDb" id="4932-YBR173C"/>
<dbReference type="PeptideAtlas" id="P38293"/>
<dbReference type="EnsemblFungi" id="YBR173C_mRNA">
    <property type="protein sequence ID" value="YBR173C"/>
    <property type="gene ID" value="YBR173C"/>
</dbReference>
<dbReference type="GeneID" id="852471"/>
<dbReference type="KEGG" id="sce:YBR173C"/>
<dbReference type="AGR" id="SGD:S000000377"/>
<dbReference type="SGD" id="S000000377">
    <property type="gene designation" value="UMP1"/>
</dbReference>
<dbReference type="VEuPathDB" id="FungiDB:YBR173C"/>
<dbReference type="eggNOG" id="KOG3061">
    <property type="taxonomic scope" value="Eukaryota"/>
</dbReference>
<dbReference type="GeneTree" id="ENSGT00390000010734"/>
<dbReference type="HOGENOM" id="CLU_100687_0_1_1"/>
<dbReference type="InParanoid" id="P38293"/>
<dbReference type="OMA" id="MSMRIVP"/>
<dbReference type="OrthoDB" id="15001at2759"/>
<dbReference type="BioCyc" id="YEAST:G3O-29121-MONOMER"/>
<dbReference type="Reactome" id="R-SCE-9907900">
    <property type="pathway name" value="Proteasome assembly"/>
</dbReference>
<dbReference type="BioGRID-ORCS" id="852471">
    <property type="hits" value="9 hits in 10 CRISPR screens"/>
</dbReference>
<dbReference type="CD-CODE" id="A777E0F8">
    <property type="entry name" value="P-body"/>
</dbReference>
<dbReference type="PRO" id="PR:P38293"/>
<dbReference type="Proteomes" id="UP000002311">
    <property type="component" value="Chromosome II"/>
</dbReference>
<dbReference type="RNAct" id="P38293">
    <property type="molecule type" value="protein"/>
</dbReference>
<dbReference type="GO" id="GO:0005737">
    <property type="term" value="C:cytoplasm"/>
    <property type="evidence" value="ECO:0000314"/>
    <property type="project" value="SGD"/>
</dbReference>
<dbReference type="GO" id="GO:0005634">
    <property type="term" value="C:nucleus"/>
    <property type="evidence" value="ECO:0000314"/>
    <property type="project" value="SGD"/>
</dbReference>
<dbReference type="GO" id="GO:0006974">
    <property type="term" value="P:DNA damage response"/>
    <property type="evidence" value="ECO:0000314"/>
    <property type="project" value="SGD"/>
</dbReference>
<dbReference type="GO" id="GO:0043248">
    <property type="term" value="P:proteasome assembly"/>
    <property type="evidence" value="ECO:0000315"/>
    <property type="project" value="SGD"/>
</dbReference>
<dbReference type="GO" id="GO:0006511">
    <property type="term" value="P:ubiquitin-dependent protein catabolic process"/>
    <property type="evidence" value="ECO:0000315"/>
    <property type="project" value="SGD"/>
</dbReference>
<dbReference type="DisProt" id="DP01140"/>
<dbReference type="InterPro" id="IPR008012">
    <property type="entry name" value="Ump1"/>
</dbReference>
<dbReference type="PANTHER" id="PTHR12828:SF3">
    <property type="entry name" value="PROTEASOME MATURATION PROTEIN"/>
    <property type="match status" value="1"/>
</dbReference>
<dbReference type="PANTHER" id="PTHR12828">
    <property type="entry name" value="PROTEASOME MATURATION PROTEIN UMP1"/>
    <property type="match status" value="1"/>
</dbReference>
<dbReference type="Pfam" id="PF05348">
    <property type="entry name" value="UMP1"/>
    <property type="match status" value="1"/>
</dbReference>
<proteinExistence type="evidence at protein level"/>
<evidence type="ECO:0000256" key="1">
    <source>
        <dbReference type="SAM" id="MobiDB-lite"/>
    </source>
</evidence>
<evidence type="ECO:0000269" key="2">
    <source>
    </source>
</evidence>
<evidence type="ECO:0000305" key="3"/>
<evidence type="ECO:0007829" key="4">
    <source>
        <dbReference type="PDB" id="8RVL"/>
    </source>
</evidence>
<evidence type="ECO:0007829" key="5">
    <source>
        <dbReference type="PDB" id="8RVP"/>
    </source>
</evidence>
<evidence type="ECO:0007829" key="6">
    <source>
        <dbReference type="PDB" id="8T08"/>
    </source>
</evidence>
<gene>
    <name type="primary">UMP1</name>
    <name type="ordered locus">YBR173C</name>
    <name type="ORF">YBR1234</name>
</gene>
<name>UMP1_YEAST</name>
<protein>
    <recommendedName>
        <fullName>Proteasome maturation factor UMP1</fullName>
    </recommendedName>
</protein>
<organism>
    <name type="scientific">Saccharomyces cerevisiae (strain ATCC 204508 / S288c)</name>
    <name type="common">Baker's yeast</name>
    <dbReference type="NCBI Taxonomy" id="559292"/>
    <lineage>
        <taxon>Eukaryota</taxon>
        <taxon>Fungi</taxon>
        <taxon>Dikarya</taxon>
        <taxon>Ascomycota</taxon>
        <taxon>Saccharomycotina</taxon>
        <taxon>Saccharomycetes</taxon>
        <taxon>Saccharomycetales</taxon>
        <taxon>Saccharomycetaceae</taxon>
        <taxon>Saccharomyces</taxon>
    </lineage>
</organism>
<comment type="function">
    <text>Short-lived chaperone present in the precursor form of the 20S proteasome and absent in the mature complex. Required for the correct assembly and enzymatic activation of the proteasome. Also prevents premature processing of the PRE2 propeptide.</text>
</comment>
<comment type="interaction">
    <interactant intactId="EBI-20093">
        <id>P38293</id>
    </interactant>
    <interactant intactId="EBI-33792">
        <id>Q05778</id>
        <label>PBA1</label>
    </interactant>
    <organismsDiffer>false</organismsDiffer>
    <experiments>2</experiments>
</comment>
<comment type="interaction">
    <interactant intactId="EBI-20093">
        <id>P38293</id>
    </interactant>
    <interactant intactId="EBI-13975">
        <id>P21243</id>
        <label>SCL1</label>
    </interactant>
    <organismsDiffer>false</organismsDiffer>
    <experiments>3</experiments>
</comment>
<comment type="PTM">
    <text>Seems to be degraded by the proteasome upon its formation.</text>
</comment>
<comment type="miscellaneous">
    <text evidence="2">Present with 2740 molecules/cell in log phase SD medium.</text>
</comment>
<comment type="similarity">
    <text evidence="3">Belongs to the POMP/UMP1 family.</text>
</comment>
<keyword id="KW-0002">3D-structure</keyword>
<keyword id="KW-0143">Chaperone</keyword>
<keyword id="KW-1185">Reference proteome</keyword>
<accession>P38293</accession>
<accession>D6VQG9</accession>
<feature type="chain" id="PRO_0000065720" description="Proteasome maturation factor UMP1">
    <location>
        <begin position="1"/>
        <end position="148"/>
    </location>
</feature>
<feature type="region of interest" description="Disordered" evidence="1">
    <location>
        <begin position="1"/>
        <end position="35"/>
    </location>
</feature>
<feature type="compositionally biased region" description="Polar residues" evidence="1">
    <location>
        <begin position="8"/>
        <end position="26"/>
    </location>
</feature>
<feature type="strand" evidence="5">
    <location>
        <begin position="11"/>
        <end position="13"/>
    </location>
</feature>
<feature type="helix" evidence="4">
    <location>
        <begin position="19"/>
        <end position="21"/>
    </location>
</feature>
<feature type="strand" evidence="4">
    <location>
        <begin position="24"/>
        <end position="26"/>
    </location>
</feature>
<feature type="helix" evidence="4">
    <location>
        <begin position="32"/>
        <end position="35"/>
    </location>
</feature>
<feature type="strand" evidence="6">
    <location>
        <begin position="37"/>
        <end position="40"/>
    </location>
</feature>
<feature type="helix" evidence="4">
    <location>
        <begin position="43"/>
        <end position="47"/>
    </location>
</feature>
<feature type="helix" evidence="4">
    <location>
        <begin position="53"/>
        <end position="58"/>
    </location>
</feature>
<feature type="helix" evidence="4">
    <location>
        <begin position="60"/>
        <end position="75"/>
    </location>
</feature>
<feature type="helix" evidence="4">
    <location>
        <begin position="79"/>
        <end position="93"/>
    </location>
</feature>
<feature type="helix" evidence="4">
    <location>
        <begin position="105"/>
        <end position="110"/>
    </location>
</feature>
<feature type="helix" evidence="4">
    <location>
        <begin position="119"/>
        <end position="122"/>
    </location>
</feature>
<feature type="turn" evidence="6">
    <location>
        <begin position="133"/>
        <end position="135"/>
    </location>
</feature>
<feature type="helix" evidence="4">
    <location>
        <begin position="138"/>
        <end position="146"/>
    </location>
</feature>
<sequence>MNIVPQDTFKSQVSTDQDKSVLSSAVPSLPDTLRQQEGGAVPLSTQLNDRHPLESTLKNWETTQRQRQMEQYRQIFGIAEPMKRTMEMEIVNRTDFNPLSTNGSIHRDILLNKECSIDWEDVYPGTGLQASTMVGDDVHSKIEKQLGI</sequence>
<reference key="1">
    <citation type="journal article" date="1998" name="Cell">
        <title>Ump1p is required for proper maturation of the 20S proteasome and becomes its substrate upon completion of the assembly.</title>
        <authorList>
            <person name="Ramos P.C."/>
            <person name="Hoeckendorff J."/>
            <person name="Johnson E.S."/>
            <person name="Varshavsky A."/>
            <person name="Dohmen R.J."/>
        </authorList>
    </citation>
    <scope>NUCLEOTIDE SEQUENCE [GENOMIC DNA]</scope>
    <source>
        <strain>YHP500</strain>
    </source>
</reference>
<reference key="2">
    <citation type="journal article" date="1994" name="EMBO J.">
        <title>Complete DNA sequence of yeast chromosome II.</title>
        <authorList>
            <person name="Feldmann H."/>
            <person name="Aigle M."/>
            <person name="Aljinovic G."/>
            <person name="Andre B."/>
            <person name="Baclet M.C."/>
            <person name="Barthe C."/>
            <person name="Baur A."/>
            <person name="Becam A.-M."/>
            <person name="Biteau N."/>
            <person name="Boles E."/>
            <person name="Brandt T."/>
            <person name="Brendel M."/>
            <person name="Brueckner M."/>
            <person name="Bussereau F."/>
            <person name="Christiansen C."/>
            <person name="Contreras R."/>
            <person name="Crouzet M."/>
            <person name="Cziepluch C."/>
            <person name="Demolis N."/>
            <person name="Delaveau T."/>
            <person name="Doignon F."/>
            <person name="Domdey H."/>
            <person name="Duesterhus S."/>
            <person name="Dubois E."/>
            <person name="Dujon B."/>
            <person name="El Bakkoury M."/>
            <person name="Entian K.-D."/>
            <person name="Feuermann M."/>
            <person name="Fiers W."/>
            <person name="Fobo G.M."/>
            <person name="Fritz C."/>
            <person name="Gassenhuber J."/>
            <person name="Glansdorff N."/>
            <person name="Goffeau A."/>
            <person name="Grivell L.A."/>
            <person name="de Haan M."/>
            <person name="Hein C."/>
            <person name="Herbert C.J."/>
            <person name="Hollenberg C.P."/>
            <person name="Holmstroem K."/>
            <person name="Jacq C."/>
            <person name="Jacquet M."/>
            <person name="Jauniaux J.-C."/>
            <person name="Jonniaux J.-L."/>
            <person name="Kallesoee T."/>
            <person name="Kiesau P."/>
            <person name="Kirchrath L."/>
            <person name="Koetter P."/>
            <person name="Korol S."/>
            <person name="Liebl S."/>
            <person name="Logghe M."/>
            <person name="Lohan A.J.E."/>
            <person name="Louis E.J."/>
            <person name="Li Z.Y."/>
            <person name="Maat M.J."/>
            <person name="Mallet L."/>
            <person name="Mannhaupt G."/>
            <person name="Messenguy F."/>
            <person name="Miosga T."/>
            <person name="Molemans F."/>
            <person name="Mueller S."/>
            <person name="Nasr F."/>
            <person name="Obermaier B."/>
            <person name="Perea J."/>
            <person name="Pierard A."/>
            <person name="Piravandi E."/>
            <person name="Pohl F.M."/>
            <person name="Pohl T.M."/>
            <person name="Potier S."/>
            <person name="Proft M."/>
            <person name="Purnelle B."/>
            <person name="Ramezani Rad M."/>
            <person name="Rieger M."/>
            <person name="Rose M."/>
            <person name="Schaaff-Gerstenschlaeger I."/>
            <person name="Scherens B."/>
            <person name="Schwarzlose C."/>
            <person name="Skala J."/>
            <person name="Slonimski P.P."/>
            <person name="Smits P.H.M."/>
            <person name="Souciet J.-L."/>
            <person name="Steensma H.Y."/>
            <person name="Stucka R."/>
            <person name="Urrestarazu L.A."/>
            <person name="van der Aart Q.J.M."/>
            <person name="Van Dyck L."/>
            <person name="Vassarotti A."/>
            <person name="Vetter I."/>
            <person name="Vierendeels F."/>
            <person name="Vissers S."/>
            <person name="Wagner G."/>
            <person name="de Wergifosse P."/>
            <person name="Wolfe K.H."/>
            <person name="Zagulski M."/>
            <person name="Zimmermann F.K."/>
            <person name="Mewes H.-W."/>
            <person name="Kleine K."/>
        </authorList>
    </citation>
    <scope>NUCLEOTIDE SEQUENCE [LARGE SCALE GENOMIC DNA]</scope>
    <source>
        <strain>ATCC 204508 / S288c</strain>
    </source>
</reference>
<reference key="3">
    <citation type="journal article" date="2014" name="G3 (Bethesda)">
        <title>The reference genome sequence of Saccharomyces cerevisiae: Then and now.</title>
        <authorList>
            <person name="Engel S.R."/>
            <person name="Dietrich F.S."/>
            <person name="Fisk D.G."/>
            <person name="Binkley G."/>
            <person name="Balakrishnan R."/>
            <person name="Costanzo M.C."/>
            <person name="Dwight S.S."/>
            <person name="Hitz B.C."/>
            <person name="Karra K."/>
            <person name="Nash R.S."/>
            <person name="Weng S."/>
            <person name="Wong E.D."/>
            <person name="Lloyd P."/>
            <person name="Skrzypek M.S."/>
            <person name="Miyasato S.R."/>
            <person name="Simison M."/>
            <person name="Cherry J.M."/>
        </authorList>
    </citation>
    <scope>GENOME REANNOTATION</scope>
    <source>
        <strain>ATCC 204508 / S288c</strain>
    </source>
</reference>
<reference key="4">
    <citation type="journal article" date="2007" name="Genome Res.">
        <title>Approaching a complete repository of sequence-verified protein-encoding clones for Saccharomyces cerevisiae.</title>
        <authorList>
            <person name="Hu Y."/>
            <person name="Rolfs A."/>
            <person name="Bhullar B."/>
            <person name="Murthy T.V.S."/>
            <person name="Zhu C."/>
            <person name="Berger M.F."/>
            <person name="Camargo A.A."/>
            <person name="Kelley F."/>
            <person name="McCarron S."/>
            <person name="Jepson D."/>
            <person name="Richardson A."/>
            <person name="Raphael J."/>
            <person name="Moreira D."/>
            <person name="Taycher E."/>
            <person name="Zuo D."/>
            <person name="Mohr S."/>
            <person name="Kane M.F."/>
            <person name="Williamson J."/>
            <person name="Simpson A.J.G."/>
            <person name="Bulyk M.L."/>
            <person name="Harlow E."/>
            <person name="Marsischky G."/>
            <person name="Kolodner R.D."/>
            <person name="LaBaer J."/>
        </authorList>
    </citation>
    <scope>NUCLEOTIDE SEQUENCE [GENOMIC DNA]</scope>
    <source>
        <strain>ATCC 204508 / S288c</strain>
    </source>
</reference>
<reference key="5">
    <citation type="journal article" date="2003" name="Nature">
        <title>Global analysis of protein expression in yeast.</title>
        <authorList>
            <person name="Ghaemmaghami S."/>
            <person name="Huh W.-K."/>
            <person name="Bower K."/>
            <person name="Howson R.W."/>
            <person name="Belle A."/>
            <person name="Dephoure N."/>
            <person name="O'Shea E.K."/>
            <person name="Weissman J.S."/>
        </authorList>
    </citation>
    <scope>LEVEL OF PROTEIN EXPRESSION [LARGE SCALE ANALYSIS]</scope>
</reference>